<name>PYRG_RHIJ3</name>
<dbReference type="EC" id="6.3.4.2" evidence="1"/>
<dbReference type="EMBL" id="AM236080">
    <property type="protein sequence ID" value="CAK07999.1"/>
    <property type="molecule type" value="Genomic_DNA"/>
</dbReference>
<dbReference type="RefSeq" id="WP_003539844.1">
    <property type="nucleotide sequence ID" value="NC_008380.1"/>
</dbReference>
<dbReference type="SMR" id="Q1MGC4"/>
<dbReference type="MEROPS" id="C26.964"/>
<dbReference type="EnsemblBacteria" id="CAK07999">
    <property type="protein sequence ID" value="CAK07999"/>
    <property type="gene ID" value="RL2511"/>
</dbReference>
<dbReference type="KEGG" id="rle:RL2511"/>
<dbReference type="eggNOG" id="COG0504">
    <property type="taxonomic scope" value="Bacteria"/>
</dbReference>
<dbReference type="HOGENOM" id="CLU_011675_5_0_5"/>
<dbReference type="UniPathway" id="UPA00159">
    <property type="reaction ID" value="UER00277"/>
</dbReference>
<dbReference type="Proteomes" id="UP000006575">
    <property type="component" value="Chromosome"/>
</dbReference>
<dbReference type="GO" id="GO:0005829">
    <property type="term" value="C:cytosol"/>
    <property type="evidence" value="ECO:0007669"/>
    <property type="project" value="TreeGrafter"/>
</dbReference>
<dbReference type="GO" id="GO:0005524">
    <property type="term" value="F:ATP binding"/>
    <property type="evidence" value="ECO:0007669"/>
    <property type="project" value="UniProtKB-KW"/>
</dbReference>
<dbReference type="GO" id="GO:0003883">
    <property type="term" value="F:CTP synthase activity"/>
    <property type="evidence" value="ECO:0007669"/>
    <property type="project" value="UniProtKB-UniRule"/>
</dbReference>
<dbReference type="GO" id="GO:0004359">
    <property type="term" value="F:glutaminase activity"/>
    <property type="evidence" value="ECO:0007669"/>
    <property type="project" value="RHEA"/>
</dbReference>
<dbReference type="GO" id="GO:0042802">
    <property type="term" value="F:identical protein binding"/>
    <property type="evidence" value="ECO:0007669"/>
    <property type="project" value="TreeGrafter"/>
</dbReference>
<dbReference type="GO" id="GO:0046872">
    <property type="term" value="F:metal ion binding"/>
    <property type="evidence" value="ECO:0007669"/>
    <property type="project" value="UniProtKB-KW"/>
</dbReference>
<dbReference type="GO" id="GO:0044210">
    <property type="term" value="P:'de novo' CTP biosynthetic process"/>
    <property type="evidence" value="ECO:0007669"/>
    <property type="project" value="UniProtKB-UniRule"/>
</dbReference>
<dbReference type="GO" id="GO:0019856">
    <property type="term" value="P:pyrimidine nucleobase biosynthetic process"/>
    <property type="evidence" value="ECO:0007669"/>
    <property type="project" value="TreeGrafter"/>
</dbReference>
<dbReference type="CDD" id="cd03113">
    <property type="entry name" value="CTPS_N"/>
    <property type="match status" value="1"/>
</dbReference>
<dbReference type="CDD" id="cd01746">
    <property type="entry name" value="GATase1_CTP_Synthase"/>
    <property type="match status" value="1"/>
</dbReference>
<dbReference type="FunFam" id="3.40.50.300:FF:000009">
    <property type="entry name" value="CTP synthase"/>
    <property type="match status" value="1"/>
</dbReference>
<dbReference type="FunFam" id="3.40.50.880:FF:000002">
    <property type="entry name" value="CTP synthase"/>
    <property type="match status" value="1"/>
</dbReference>
<dbReference type="Gene3D" id="3.40.50.880">
    <property type="match status" value="1"/>
</dbReference>
<dbReference type="Gene3D" id="3.40.50.300">
    <property type="entry name" value="P-loop containing nucleotide triphosphate hydrolases"/>
    <property type="match status" value="1"/>
</dbReference>
<dbReference type="HAMAP" id="MF_01227">
    <property type="entry name" value="PyrG"/>
    <property type="match status" value="1"/>
</dbReference>
<dbReference type="InterPro" id="IPR029062">
    <property type="entry name" value="Class_I_gatase-like"/>
</dbReference>
<dbReference type="InterPro" id="IPR004468">
    <property type="entry name" value="CTP_synthase"/>
</dbReference>
<dbReference type="InterPro" id="IPR017456">
    <property type="entry name" value="CTP_synthase_N"/>
</dbReference>
<dbReference type="InterPro" id="IPR017926">
    <property type="entry name" value="GATASE"/>
</dbReference>
<dbReference type="InterPro" id="IPR033828">
    <property type="entry name" value="GATase1_CTP_Synthase"/>
</dbReference>
<dbReference type="InterPro" id="IPR027417">
    <property type="entry name" value="P-loop_NTPase"/>
</dbReference>
<dbReference type="NCBIfam" id="NF003792">
    <property type="entry name" value="PRK05380.1"/>
    <property type="match status" value="1"/>
</dbReference>
<dbReference type="NCBIfam" id="TIGR00337">
    <property type="entry name" value="PyrG"/>
    <property type="match status" value="1"/>
</dbReference>
<dbReference type="PANTHER" id="PTHR11550">
    <property type="entry name" value="CTP SYNTHASE"/>
    <property type="match status" value="1"/>
</dbReference>
<dbReference type="PANTHER" id="PTHR11550:SF0">
    <property type="entry name" value="CTP SYNTHASE-RELATED"/>
    <property type="match status" value="1"/>
</dbReference>
<dbReference type="Pfam" id="PF06418">
    <property type="entry name" value="CTP_synth_N"/>
    <property type="match status" value="1"/>
</dbReference>
<dbReference type="Pfam" id="PF00117">
    <property type="entry name" value="GATase"/>
    <property type="match status" value="1"/>
</dbReference>
<dbReference type="SUPFAM" id="SSF52317">
    <property type="entry name" value="Class I glutamine amidotransferase-like"/>
    <property type="match status" value="1"/>
</dbReference>
<dbReference type="SUPFAM" id="SSF52540">
    <property type="entry name" value="P-loop containing nucleoside triphosphate hydrolases"/>
    <property type="match status" value="1"/>
</dbReference>
<dbReference type="PROSITE" id="PS51273">
    <property type="entry name" value="GATASE_TYPE_1"/>
    <property type="match status" value="1"/>
</dbReference>
<protein>
    <recommendedName>
        <fullName evidence="1">CTP synthase</fullName>
        <ecNumber evidence="1">6.3.4.2</ecNumber>
    </recommendedName>
    <alternativeName>
        <fullName evidence="1">Cytidine 5'-triphosphate synthase</fullName>
    </alternativeName>
    <alternativeName>
        <fullName evidence="1">Cytidine triphosphate synthetase</fullName>
        <shortName evidence="1">CTP synthetase</shortName>
        <shortName evidence="1">CTPS</shortName>
    </alternativeName>
    <alternativeName>
        <fullName evidence="1">UTP--ammonia ligase</fullName>
    </alternativeName>
</protein>
<sequence length="542" mass="59865">MARYVFITGGVVSSLGKGIAAAALGALLQARGYRVRLRKLDPYLNVDPGTMSPTQHGEVFVTDDGAETDLDLGHYERFTGRSATKTDNITTGRIYKNIIDKERRGDYLGATVQVIPHVTNEIKDFVIEGNDDYDFVICEIGGTVGDIEAMPFMEAIRQLGNDLPRGTAVYVHLTLMPYIPAAGELKTKPTQHSVKELQALGIHPDILLVRADREIPEAERRKLSLFCNVRPSAVIQALDVANIYDVPIAYHKEGLDDEVLAAFGIEPAPKPRLDPWEEVCNRIRTPEGEVTIAIVGKYTGLKDAYKSLIEALHHGGIANRVKVNLEWIESEVFEKEDPAPYLEKVHGILVPGGFGERGSEGKIHAARFARERKVPYFGICFGMQMAVIEAARNLADVSGASSTEFGPTKEPVVGLMTEWVKGNELQKRTAAGDLGGTMRLGAYKAALKKGTKISDIYGSTDISERHRHRYEVNVDYKDRLENCGLVFSGMSPDGVLPETIEYPDHPWFIGVQYHPELKSRPLDPHPLFASFIEAATEQSRLV</sequence>
<gene>
    <name evidence="1" type="primary">pyrG</name>
    <name type="ordered locus">RL2511</name>
</gene>
<evidence type="ECO:0000255" key="1">
    <source>
        <dbReference type="HAMAP-Rule" id="MF_01227"/>
    </source>
</evidence>
<organism>
    <name type="scientific">Rhizobium johnstonii (strain DSM 114642 / LMG 32736 / 3841)</name>
    <name type="common">Rhizobium leguminosarum bv. viciae</name>
    <dbReference type="NCBI Taxonomy" id="216596"/>
    <lineage>
        <taxon>Bacteria</taxon>
        <taxon>Pseudomonadati</taxon>
        <taxon>Pseudomonadota</taxon>
        <taxon>Alphaproteobacteria</taxon>
        <taxon>Hyphomicrobiales</taxon>
        <taxon>Rhizobiaceae</taxon>
        <taxon>Rhizobium/Agrobacterium group</taxon>
        <taxon>Rhizobium</taxon>
        <taxon>Rhizobium johnstonii</taxon>
    </lineage>
</organism>
<feature type="chain" id="PRO_0000266194" description="CTP synthase">
    <location>
        <begin position="1"/>
        <end position="542"/>
    </location>
</feature>
<feature type="domain" description="Glutamine amidotransferase type-1" evidence="1">
    <location>
        <begin position="291"/>
        <end position="541"/>
    </location>
</feature>
<feature type="region of interest" description="Amidoligase domain" evidence="1">
    <location>
        <begin position="1"/>
        <end position="265"/>
    </location>
</feature>
<feature type="active site" description="Nucleophile; for glutamine hydrolysis" evidence="1">
    <location>
        <position position="380"/>
    </location>
</feature>
<feature type="active site" evidence="1">
    <location>
        <position position="514"/>
    </location>
</feature>
<feature type="active site" evidence="1">
    <location>
        <position position="516"/>
    </location>
</feature>
<feature type="binding site" evidence="1">
    <location>
        <position position="13"/>
    </location>
    <ligand>
        <name>CTP</name>
        <dbReference type="ChEBI" id="CHEBI:37563"/>
        <note>allosteric inhibitor</note>
    </ligand>
</feature>
<feature type="binding site" evidence="1">
    <location>
        <position position="13"/>
    </location>
    <ligand>
        <name>UTP</name>
        <dbReference type="ChEBI" id="CHEBI:46398"/>
    </ligand>
</feature>
<feature type="binding site" evidence="1">
    <location>
        <begin position="14"/>
        <end position="19"/>
    </location>
    <ligand>
        <name>ATP</name>
        <dbReference type="ChEBI" id="CHEBI:30616"/>
    </ligand>
</feature>
<feature type="binding site" evidence="1">
    <location>
        <position position="71"/>
    </location>
    <ligand>
        <name>ATP</name>
        <dbReference type="ChEBI" id="CHEBI:30616"/>
    </ligand>
</feature>
<feature type="binding site" evidence="1">
    <location>
        <position position="71"/>
    </location>
    <ligand>
        <name>Mg(2+)</name>
        <dbReference type="ChEBI" id="CHEBI:18420"/>
    </ligand>
</feature>
<feature type="binding site" evidence="1">
    <location>
        <position position="139"/>
    </location>
    <ligand>
        <name>Mg(2+)</name>
        <dbReference type="ChEBI" id="CHEBI:18420"/>
    </ligand>
</feature>
<feature type="binding site" evidence="1">
    <location>
        <begin position="146"/>
        <end position="148"/>
    </location>
    <ligand>
        <name>CTP</name>
        <dbReference type="ChEBI" id="CHEBI:37563"/>
        <note>allosteric inhibitor</note>
    </ligand>
</feature>
<feature type="binding site" evidence="1">
    <location>
        <begin position="186"/>
        <end position="191"/>
    </location>
    <ligand>
        <name>CTP</name>
        <dbReference type="ChEBI" id="CHEBI:37563"/>
        <note>allosteric inhibitor</note>
    </ligand>
</feature>
<feature type="binding site" evidence="1">
    <location>
        <begin position="186"/>
        <end position="191"/>
    </location>
    <ligand>
        <name>UTP</name>
        <dbReference type="ChEBI" id="CHEBI:46398"/>
    </ligand>
</feature>
<feature type="binding site" evidence="1">
    <location>
        <position position="222"/>
    </location>
    <ligand>
        <name>CTP</name>
        <dbReference type="ChEBI" id="CHEBI:37563"/>
        <note>allosteric inhibitor</note>
    </ligand>
</feature>
<feature type="binding site" evidence="1">
    <location>
        <position position="222"/>
    </location>
    <ligand>
        <name>UTP</name>
        <dbReference type="ChEBI" id="CHEBI:46398"/>
    </ligand>
</feature>
<feature type="binding site" evidence="1">
    <location>
        <position position="353"/>
    </location>
    <ligand>
        <name>L-glutamine</name>
        <dbReference type="ChEBI" id="CHEBI:58359"/>
    </ligand>
</feature>
<feature type="binding site" evidence="1">
    <location>
        <begin position="381"/>
        <end position="384"/>
    </location>
    <ligand>
        <name>L-glutamine</name>
        <dbReference type="ChEBI" id="CHEBI:58359"/>
    </ligand>
</feature>
<feature type="binding site" evidence="1">
    <location>
        <position position="404"/>
    </location>
    <ligand>
        <name>L-glutamine</name>
        <dbReference type="ChEBI" id="CHEBI:58359"/>
    </ligand>
</feature>
<feature type="binding site" evidence="1">
    <location>
        <position position="469"/>
    </location>
    <ligand>
        <name>L-glutamine</name>
        <dbReference type="ChEBI" id="CHEBI:58359"/>
    </ligand>
</feature>
<accession>Q1MGC4</accession>
<keyword id="KW-0067">ATP-binding</keyword>
<keyword id="KW-0315">Glutamine amidotransferase</keyword>
<keyword id="KW-0436">Ligase</keyword>
<keyword id="KW-0460">Magnesium</keyword>
<keyword id="KW-0479">Metal-binding</keyword>
<keyword id="KW-0547">Nucleotide-binding</keyword>
<keyword id="KW-0665">Pyrimidine biosynthesis</keyword>
<reference key="1">
    <citation type="journal article" date="2006" name="Genome Biol.">
        <title>The genome of Rhizobium leguminosarum has recognizable core and accessory components.</title>
        <authorList>
            <person name="Young J.P.W."/>
            <person name="Crossman L.C."/>
            <person name="Johnston A.W.B."/>
            <person name="Thomson N.R."/>
            <person name="Ghazoui Z.F."/>
            <person name="Hull K.H."/>
            <person name="Wexler M."/>
            <person name="Curson A.R.J."/>
            <person name="Todd J.D."/>
            <person name="Poole P.S."/>
            <person name="Mauchline T.H."/>
            <person name="East A.K."/>
            <person name="Quail M.A."/>
            <person name="Churcher C."/>
            <person name="Arrowsmith C."/>
            <person name="Cherevach I."/>
            <person name="Chillingworth T."/>
            <person name="Clarke K."/>
            <person name="Cronin A."/>
            <person name="Davis P."/>
            <person name="Fraser A."/>
            <person name="Hance Z."/>
            <person name="Hauser H."/>
            <person name="Jagels K."/>
            <person name="Moule S."/>
            <person name="Mungall K."/>
            <person name="Norbertczak H."/>
            <person name="Rabbinowitsch E."/>
            <person name="Sanders M."/>
            <person name="Simmonds M."/>
            <person name="Whitehead S."/>
            <person name="Parkhill J."/>
        </authorList>
    </citation>
    <scope>NUCLEOTIDE SEQUENCE [LARGE SCALE GENOMIC DNA]</scope>
    <source>
        <strain>DSM 114642 / LMG 32736 / 3841</strain>
    </source>
</reference>
<comment type="function">
    <text evidence="1">Catalyzes the ATP-dependent amination of UTP to CTP with either L-glutamine or ammonia as the source of nitrogen. Regulates intracellular CTP levels through interactions with the four ribonucleotide triphosphates.</text>
</comment>
<comment type="catalytic activity">
    <reaction evidence="1">
        <text>UTP + L-glutamine + ATP + H2O = CTP + L-glutamate + ADP + phosphate + 2 H(+)</text>
        <dbReference type="Rhea" id="RHEA:26426"/>
        <dbReference type="ChEBI" id="CHEBI:15377"/>
        <dbReference type="ChEBI" id="CHEBI:15378"/>
        <dbReference type="ChEBI" id="CHEBI:29985"/>
        <dbReference type="ChEBI" id="CHEBI:30616"/>
        <dbReference type="ChEBI" id="CHEBI:37563"/>
        <dbReference type="ChEBI" id="CHEBI:43474"/>
        <dbReference type="ChEBI" id="CHEBI:46398"/>
        <dbReference type="ChEBI" id="CHEBI:58359"/>
        <dbReference type="ChEBI" id="CHEBI:456216"/>
        <dbReference type="EC" id="6.3.4.2"/>
    </reaction>
</comment>
<comment type="catalytic activity">
    <reaction evidence="1">
        <text>L-glutamine + H2O = L-glutamate + NH4(+)</text>
        <dbReference type="Rhea" id="RHEA:15889"/>
        <dbReference type="ChEBI" id="CHEBI:15377"/>
        <dbReference type="ChEBI" id="CHEBI:28938"/>
        <dbReference type="ChEBI" id="CHEBI:29985"/>
        <dbReference type="ChEBI" id="CHEBI:58359"/>
    </reaction>
</comment>
<comment type="catalytic activity">
    <reaction evidence="1">
        <text>UTP + NH4(+) + ATP = CTP + ADP + phosphate + 2 H(+)</text>
        <dbReference type="Rhea" id="RHEA:16597"/>
        <dbReference type="ChEBI" id="CHEBI:15378"/>
        <dbReference type="ChEBI" id="CHEBI:28938"/>
        <dbReference type="ChEBI" id="CHEBI:30616"/>
        <dbReference type="ChEBI" id="CHEBI:37563"/>
        <dbReference type="ChEBI" id="CHEBI:43474"/>
        <dbReference type="ChEBI" id="CHEBI:46398"/>
        <dbReference type="ChEBI" id="CHEBI:456216"/>
    </reaction>
</comment>
<comment type="activity regulation">
    <text evidence="1">Allosterically activated by GTP, when glutamine is the substrate; GTP has no effect on the reaction when ammonia is the substrate. The allosteric effector GTP functions by stabilizing the protein conformation that binds the tetrahedral intermediate(s) formed during glutamine hydrolysis. Inhibited by the product CTP, via allosteric rather than competitive inhibition.</text>
</comment>
<comment type="pathway">
    <text evidence="1">Pyrimidine metabolism; CTP biosynthesis via de novo pathway; CTP from UDP: step 2/2.</text>
</comment>
<comment type="subunit">
    <text evidence="1">Homotetramer.</text>
</comment>
<comment type="miscellaneous">
    <text evidence="1">CTPSs have evolved a hybrid strategy for distinguishing between UTP and CTP. The overlapping regions of the product feedback inhibitory and substrate sites recognize a common feature in both compounds, the triphosphate moiety. To differentiate isosteric substrate and product pyrimidine rings, an additional pocket far from the expected kinase/ligase catalytic site, specifically recognizes the cytosine and ribose portions of the product inhibitor.</text>
</comment>
<comment type="similarity">
    <text evidence="1">Belongs to the CTP synthase family.</text>
</comment>
<proteinExistence type="inferred from homology"/>